<comment type="function">
    <text evidence="1">Allows the formation of correctly charged Asn-tRNA(Asn) or Gln-tRNA(Gln) through the transamidation of misacylated Asp-tRNA(Asn) or Glu-tRNA(Gln) in organisms which lack either or both of asparaginyl-tRNA or glutaminyl-tRNA synthetases. The reaction takes place in the presence of glutamine and ATP through an activated phospho-Asp-tRNA(Asn) or phospho-Glu-tRNA(Gln).</text>
</comment>
<comment type="catalytic activity">
    <reaction evidence="1">
        <text>L-glutamyl-tRNA(Gln) + L-glutamine + ATP + H2O = L-glutaminyl-tRNA(Gln) + L-glutamate + ADP + phosphate + H(+)</text>
        <dbReference type="Rhea" id="RHEA:17521"/>
        <dbReference type="Rhea" id="RHEA-COMP:9681"/>
        <dbReference type="Rhea" id="RHEA-COMP:9684"/>
        <dbReference type="ChEBI" id="CHEBI:15377"/>
        <dbReference type="ChEBI" id="CHEBI:15378"/>
        <dbReference type="ChEBI" id="CHEBI:29985"/>
        <dbReference type="ChEBI" id="CHEBI:30616"/>
        <dbReference type="ChEBI" id="CHEBI:43474"/>
        <dbReference type="ChEBI" id="CHEBI:58359"/>
        <dbReference type="ChEBI" id="CHEBI:78520"/>
        <dbReference type="ChEBI" id="CHEBI:78521"/>
        <dbReference type="ChEBI" id="CHEBI:456216"/>
    </reaction>
</comment>
<comment type="catalytic activity">
    <reaction evidence="1">
        <text>L-aspartyl-tRNA(Asn) + L-glutamine + ATP + H2O = L-asparaginyl-tRNA(Asn) + L-glutamate + ADP + phosphate + 2 H(+)</text>
        <dbReference type="Rhea" id="RHEA:14513"/>
        <dbReference type="Rhea" id="RHEA-COMP:9674"/>
        <dbReference type="Rhea" id="RHEA-COMP:9677"/>
        <dbReference type="ChEBI" id="CHEBI:15377"/>
        <dbReference type="ChEBI" id="CHEBI:15378"/>
        <dbReference type="ChEBI" id="CHEBI:29985"/>
        <dbReference type="ChEBI" id="CHEBI:30616"/>
        <dbReference type="ChEBI" id="CHEBI:43474"/>
        <dbReference type="ChEBI" id="CHEBI:58359"/>
        <dbReference type="ChEBI" id="CHEBI:78515"/>
        <dbReference type="ChEBI" id="CHEBI:78516"/>
        <dbReference type="ChEBI" id="CHEBI:456216"/>
    </reaction>
</comment>
<comment type="subunit">
    <text evidence="1">Heterotrimer of A, B and C subunits.</text>
</comment>
<comment type="similarity">
    <text evidence="1">Belongs to the GatC family.</text>
</comment>
<name>GATC_SYNJA</name>
<sequence>MLTREEVQHVAHLARLELTEEEEIQFTEQLADILAYVEQLKELDTEGVEPTFHVLDAELPTRPDQVEPYPNIEGILANAPDRADMFFKVPRILEGED</sequence>
<protein>
    <recommendedName>
        <fullName evidence="1">Aspartyl/glutamyl-tRNA(Asn/Gln) amidotransferase subunit C</fullName>
        <shortName evidence="1">Asp/Glu-ADT subunit C</shortName>
        <ecNumber evidence="1">6.3.5.-</ecNumber>
    </recommendedName>
</protein>
<evidence type="ECO:0000255" key="1">
    <source>
        <dbReference type="HAMAP-Rule" id="MF_00122"/>
    </source>
</evidence>
<accession>Q2JUT8</accession>
<reference key="1">
    <citation type="journal article" date="2007" name="ISME J.">
        <title>Population level functional diversity in a microbial community revealed by comparative genomic and metagenomic analyses.</title>
        <authorList>
            <person name="Bhaya D."/>
            <person name="Grossman A.R."/>
            <person name="Steunou A.-S."/>
            <person name="Khuri N."/>
            <person name="Cohan F.M."/>
            <person name="Hamamura N."/>
            <person name="Melendrez M.C."/>
            <person name="Bateson M.M."/>
            <person name="Ward D.M."/>
            <person name="Heidelberg J.F."/>
        </authorList>
    </citation>
    <scope>NUCLEOTIDE SEQUENCE [LARGE SCALE GENOMIC DNA]</scope>
    <source>
        <strain>JA-3-3Ab</strain>
    </source>
</reference>
<dbReference type="EC" id="6.3.5.-" evidence="1"/>
<dbReference type="EMBL" id="CP000239">
    <property type="protein sequence ID" value="ABC99519.1"/>
    <property type="molecule type" value="Genomic_DNA"/>
</dbReference>
<dbReference type="RefSeq" id="WP_011430197.1">
    <property type="nucleotide sequence ID" value="NC_007775.1"/>
</dbReference>
<dbReference type="SMR" id="Q2JUT8"/>
<dbReference type="STRING" id="321327.CYA_1343"/>
<dbReference type="KEGG" id="cya:CYA_1343"/>
<dbReference type="eggNOG" id="COG0721">
    <property type="taxonomic scope" value="Bacteria"/>
</dbReference>
<dbReference type="HOGENOM" id="CLU_105899_6_1_3"/>
<dbReference type="OrthoDB" id="9813938at2"/>
<dbReference type="Proteomes" id="UP000008818">
    <property type="component" value="Chromosome"/>
</dbReference>
<dbReference type="GO" id="GO:0050566">
    <property type="term" value="F:asparaginyl-tRNA synthase (glutamine-hydrolyzing) activity"/>
    <property type="evidence" value="ECO:0007669"/>
    <property type="project" value="RHEA"/>
</dbReference>
<dbReference type="GO" id="GO:0005524">
    <property type="term" value="F:ATP binding"/>
    <property type="evidence" value="ECO:0007669"/>
    <property type="project" value="UniProtKB-KW"/>
</dbReference>
<dbReference type="GO" id="GO:0050567">
    <property type="term" value="F:glutaminyl-tRNA synthase (glutamine-hydrolyzing) activity"/>
    <property type="evidence" value="ECO:0007669"/>
    <property type="project" value="UniProtKB-UniRule"/>
</dbReference>
<dbReference type="GO" id="GO:0070681">
    <property type="term" value="P:glutaminyl-tRNAGln biosynthesis via transamidation"/>
    <property type="evidence" value="ECO:0007669"/>
    <property type="project" value="TreeGrafter"/>
</dbReference>
<dbReference type="GO" id="GO:0006450">
    <property type="term" value="P:regulation of translational fidelity"/>
    <property type="evidence" value="ECO:0007669"/>
    <property type="project" value="InterPro"/>
</dbReference>
<dbReference type="GO" id="GO:0006412">
    <property type="term" value="P:translation"/>
    <property type="evidence" value="ECO:0007669"/>
    <property type="project" value="UniProtKB-UniRule"/>
</dbReference>
<dbReference type="Gene3D" id="1.10.20.60">
    <property type="entry name" value="Glu-tRNAGln amidotransferase C subunit, N-terminal domain"/>
    <property type="match status" value="1"/>
</dbReference>
<dbReference type="HAMAP" id="MF_00122">
    <property type="entry name" value="GatC"/>
    <property type="match status" value="1"/>
</dbReference>
<dbReference type="InterPro" id="IPR036113">
    <property type="entry name" value="Asp/Glu-ADT_sf_sub_c"/>
</dbReference>
<dbReference type="InterPro" id="IPR003837">
    <property type="entry name" value="GatC"/>
</dbReference>
<dbReference type="NCBIfam" id="TIGR00135">
    <property type="entry name" value="gatC"/>
    <property type="match status" value="1"/>
</dbReference>
<dbReference type="PANTHER" id="PTHR15004">
    <property type="entry name" value="GLUTAMYL-TRNA(GLN) AMIDOTRANSFERASE SUBUNIT C, MITOCHONDRIAL"/>
    <property type="match status" value="1"/>
</dbReference>
<dbReference type="PANTHER" id="PTHR15004:SF0">
    <property type="entry name" value="GLUTAMYL-TRNA(GLN) AMIDOTRANSFERASE SUBUNIT C, MITOCHONDRIAL"/>
    <property type="match status" value="1"/>
</dbReference>
<dbReference type="Pfam" id="PF02686">
    <property type="entry name" value="GatC"/>
    <property type="match status" value="1"/>
</dbReference>
<dbReference type="SUPFAM" id="SSF141000">
    <property type="entry name" value="Glu-tRNAGln amidotransferase C subunit"/>
    <property type="match status" value="1"/>
</dbReference>
<proteinExistence type="inferred from homology"/>
<organism>
    <name type="scientific">Synechococcus sp. (strain JA-3-3Ab)</name>
    <name type="common">Cyanobacteria bacterium Yellowstone A-Prime</name>
    <dbReference type="NCBI Taxonomy" id="321327"/>
    <lineage>
        <taxon>Bacteria</taxon>
        <taxon>Bacillati</taxon>
        <taxon>Cyanobacteriota</taxon>
        <taxon>Cyanophyceae</taxon>
        <taxon>Synechococcales</taxon>
        <taxon>Synechococcaceae</taxon>
        <taxon>Synechococcus</taxon>
    </lineage>
</organism>
<feature type="chain" id="PRO_1000016229" description="Aspartyl/glutamyl-tRNA(Asn/Gln) amidotransferase subunit C">
    <location>
        <begin position="1"/>
        <end position="97"/>
    </location>
</feature>
<keyword id="KW-0067">ATP-binding</keyword>
<keyword id="KW-0436">Ligase</keyword>
<keyword id="KW-0547">Nucleotide-binding</keyword>
<keyword id="KW-0648">Protein biosynthesis</keyword>
<gene>
    <name evidence="1" type="primary">gatC</name>
    <name type="ordered locus">CYA_1343</name>
</gene>